<keyword id="KW-1185">Reference proteome</keyword>
<accession>Q9QJ55</accession>
<evidence type="ECO:0000305" key="1"/>
<name>VU4_HHV6Z</name>
<protein>
    <recommendedName>
        <fullName>Protein U4</fullName>
    </recommendedName>
</protein>
<feature type="chain" id="PRO_0000408454" description="Protein U4">
    <location>
        <begin position="1"/>
        <end position="535"/>
    </location>
</feature>
<sequence>MELLDHDIYKGPVRERVTYTIPNHPYLSLTVHHSRELDVDLKDITEEMIIDSGTLTAEDLFMTRGLRFCDDSVLWAALAEKVSVEFQRRGKTTMDLSAFMSLLERLTFEDETSAFYRLLTKCTALAHFSILEYIVDGEKRDTISAHFNRLLELLDSLFLQFLMLRNRSESNTLLTLFDILPNPKEIYGDAASPTSVLLKHFLSDYIFVAYASSYRFVSSVLCSCDQCRASLFRIYLGKKDSRAVNISDISEFDPADLILGQLHLDAREAVALRAEIDRDLGSSLILNSMERRHLPILHDKQLGRGHFERNILKVYCNIVLCLFLLRRVKQRIVSDLTAIARFFVKAISEMERCIDTVSGLHGVRIKLLVVSSQFEIKDPMRVPRLCFFFLEIVTILVSGYDKERHRVRALLEHLCLKKICLGDLCASMRLAREIRHDVLEGFLNTLELSYMSNPVRFFRFHDCNLYGTHMWSGVYPNVVPYAVRGGGSFDIRLQEHRRRQKRIVLRRRLIRRVQQRGLDIREARRVPKLACVTFI</sequence>
<organismHost>
    <name type="scientific">Homo sapiens</name>
    <name type="common">Human</name>
    <dbReference type="NCBI Taxonomy" id="9606"/>
</organismHost>
<dbReference type="EMBL" id="AF157706">
    <property type="protein sequence ID" value="AAD49623.1"/>
    <property type="molecule type" value="Genomic_DNA"/>
</dbReference>
<dbReference type="RefSeq" id="NP_050186.1">
    <property type="nucleotide sequence ID" value="NC_000898.1"/>
</dbReference>
<dbReference type="DNASU" id="1497007"/>
<dbReference type="GeneID" id="1497007"/>
<dbReference type="KEGG" id="vg:1497007"/>
<dbReference type="Proteomes" id="UP000006930">
    <property type="component" value="Segment"/>
</dbReference>
<gene>
    <name type="primary">U4</name>
</gene>
<reference key="1">
    <citation type="journal article" date="1999" name="J. Virol.">
        <title>Human herpesvirus 6B genome sequence: coding content and comparison with human herpesvirus 6A.</title>
        <authorList>
            <person name="Dominguez G."/>
            <person name="Dambaugh T.R."/>
            <person name="Stamey F.R."/>
            <person name="Dewhurst S."/>
            <person name="Inoue N."/>
            <person name="Pellett P.E."/>
        </authorList>
    </citation>
    <scope>NUCLEOTIDE SEQUENCE [LARGE SCALE GENOMIC DNA]</scope>
</reference>
<organism>
    <name type="scientific">Human herpesvirus 6B (strain Z29)</name>
    <name type="common">HHV-6 variant B</name>
    <name type="synonym">Human B lymphotropic virus</name>
    <dbReference type="NCBI Taxonomy" id="36351"/>
    <lineage>
        <taxon>Viruses</taxon>
        <taxon>Duplodnaviria</taxon>
        <taxon>Heunggongvirae</taxon>
        <taxon>Peploviricota</taxon>
        <taxon>Herviviricetes</taxon>
        <taxon>Herpesvirales</taxon>
        <taxon>Orthoherpesviridae</taxon>
        <taxon>Betaherpesvirinae</taxon>
        <taxon>Roseolovirus</taxon>
        <taxon>Roseolovirus humanbeta6b</taxon>
        <taxon>Human herpesvirus 6B</taxon>
    </lineage>
</organism>
<comment type="similarity">
    <text evidence="1">Belongs to the herpesviridae U4 family.</text>
</comment>
<proteinExistence type="inferred from homology"/>